<sequence length="111" mass="12746">MAKIQFSRGLDEEVIPEVRLTRSRTGDTGTATFIFTNPKILDQGTTEDITGMYLIDEEGEIITREVKGKFINGRPEGLEAVYVMKSAQEWERFIRFMERYAQENDLGFSKS</sequence>
<dbReference type="EMBL" id="BA000019">
    <property type="protein sequence ID" value="BAB72758.1"/>
    <property type="molecule type" value="Genomic_DNA"/>
</dbReference>
<dbReference type="PIR" id="AG1906">
    <property type="entry name" value="AG1906"/>
</dbReference>
<dbReference type="RefSeq" id="WP_010994975.1">
    <property type="nucleotide sequence ID" value="NZ_RSCN01000006.1"/>
</dbReference>
<dbReference type="SMR" id="Q8YYP5"/>
<dbReference type="STRING" id="103690.gene:10492812"/>
<dbReference type="KEGG" id="ana:all0801"/>
<dbReference type="eggNOG" id="ENOG5031GDS">
    <property type="taxonomic scope" value="Bacteria"/>
</dbReference>
<dbReference type="OrthoDB" id="559598at2"/>
<dbReference type="Proteomes" id="UP000002483">
    <property type="component" value="Chromosome"/>
</dbReference>
<dbReference type="GO" id="GO:0009654">
    <property type="term" value="C:photosystem II oxygen evolving complex"/>
    <property type="evidence" value="ECO:0007669"/>
    <property type="project" value="InterPro"/>
</dbReference>
<dbReference type="GO" id="GO:0031676">
    <property type="term" value="C:plasma membrane-derived thylakoid membrane"/>
    <property type="evidence" value="ECO:0007669"/>
    <property type="project" value="UniProtKB-SubCell"/>
</dbReference>
<dbReference type="GO" id="GO:0015979">
    <property type="term" value="P:photosynthesis"/>
    <property type="evidence" value="ECO:0007669"/>
    <property type="project" value="UniProtKB-UniRule"/>
</dbReference>
<dbReference type="Gene3D" id="2.40.30.220">
    <property type="entry name" value="Photosystem II Psb28"/>
    <property type="match status" value="1"/>
</dbReference>
<dbReference type="HAMAP" id="MF_01370">
    <property type="entry name" value="PSII_Psb28"/>
    <property type="match status" value="1"/>
</dbReference>
<dbReference type="InterPro" id="IPR038676">
    <property type="entry name" value="Psb28_c1_sf"/>
</dbReference>
<dbReference type="InterPro" id="IPR005610">
    <property type="entry name" value="PSII_Psb28_class-1"/>
</dbReference>
<dbReference type="NCBIfam" id="TIGR03047">
    <property type="entry name" value="PS_II_psb28"/>
    <property type="match status" value="1"/>
</dbReference>
<dbReference type="PANTHER" id="PTHR34963">
    <property type="match status" value="1"/>
</dbReference>
<dbReference type="PANTHER" id="PTHR34963:SF2">
    <property type="entry name" value="PHOTOSYSTEM II REACTION CENTER PSB28 PROTEIN, CHLOROPLASTIC"/>
    <property type="match status" value="1"/>
</dbReference>
<dbReference type="Pfam" id="PF03912">
    <property type="entry name" value="Psb28"/>
    <property type="match status" value="1"/>
</dbReference>
<evidence type="ECO:0000255" key="1">
    <source>
        <dbReference type="HAMAP-Rule" id="MF_01370"/>
    </source>
</evidence>
<protein>
    <recommendedName>
        <fullName evidence="1">Photosystem II reaction center Psb28 protein</fullName>
    </recommendedName>
    <alternativeName>
        <fullName evidence="1">Photosystem II 13 kDa protein</fullName>
    </alternativeName>
    <alternativeName>
        <fullName evidence="1">Photosystem II reaction center W protein</fullName>
    </alternativeName>
</protein>
<gene>
    <name evidence="1" type="primary">psb28</name>
    <name type="ordered locus">all0801</name>
</gene>
<keyword id="KW-0472">Membrane</keyword>
<keyword id="KW-0602">Photosynthesis</keyword>
<keyword id="KW-0604">Photosystem II</keyword>
<keyword id="KW-1185">Reference proteome</keyword>
<keyword id="KW-0793">Thylakoid</keyword>
<organism>
    <name type="scientific">Nostoc sp. (strain PCC 7120 / SAG 25.82 / UTEX 2576)</name>
    <dbReference type="NCBI Taxonomy" id="103690"/>
    <lineage>
        <taxon>Bacteria</taxon>
        <taxon>Bacillati</taxon>
        <taxon>Cyanobacteriota</taxon>
        <taxon>Cyanophyceae</taxon>
        <taxon>Nostocales</taxon>
        <taxon>Nostocaceae</taxon>
        <taxon>Nostoc</taxon>
    </lineage>
</organism>
<feature type="chain" id="PRO_0000271559" description="Photosystem II reaction center Psb28 protein">
    <location>
        <begin position="1"/>
        <end position="111"/>
    </location>
</feature>
<proteinExistence type="inferred from homology"/>
<comment type="subunit">
    <text evidence="1">Part of the photosystem II complex.</text>
</comment>
<comment type="subcellular location">
    <subcellularLocation>
        <location evidence="1">Cellular thylakoid membrane</location>
        <topology evidence="1">Peripheral membrane protein</topology>
        <orientation evidence="1">Cytoplasmic side</orientation>
    </subcellularLocation>
</comment>
<comment type="similarity">
    <text evidence="1">Belongs to the Psb28 family.</text>
</comment>
<accession>Q8YYP5</accession>
<name>PSB28_NOSS1</name>
<reference key="1">
    <citation type="journal article" date="2001" name="DNA Res.">
        <title>Complete genomic sequence of the filamentous nitrogen-fixing cyanobacterium Anabaena sp. strain PCC 7120.</title>
        <authorList>
            <person name="Kaneko T."/>
            <person name="Nakamura Y."/>
            <person name="Wolk C.P."/>
            <person name="Kuritz T."/>
            <person name="Sasamoto S."/>
            <person name="Watanabe A."/>
            <person name="Iriguchi M."/>
            <person name="Ishikawa A."/>
            <person name="Kawashima K."/>
            <person name="Kimura T."/>
            <person name="Kishida Y."/>
            <person name="Kohara M."/>
            <person name="Matsumoto M."/>
            <person name="Matsuno A."/>
            <person name="Muraki A."/>
            <person name="Nakazaki N."/>
            <person name="Shimpo S."/>
            <person name="Sugimoto M."/>
            <person name="Takazawa M."/>
            <person name="Yamada M."/>
            <person name="Yasuda M."/>
            <person name="Tabata S."/>
        </authorList>
    </citation>
    <scope>NUCLEOTIDE SEQUENCE [LARGE SCALE GENOMIC DNA]</scope>
    <source>
        <strain>PCC 7120 / SAG 25.82 / UTEX 2576</strain>
    </source>
</reference>